<proteinExistence type="inferred from homology"/>
<sequence length="616" mass="65666">MALLQISEPGLSAAPHQRRLAAGIDLGTTNSLVATVRSGQAETLADHEGRHLLPSVVHYQQQGHSVGYDARTNAALDTANTISSVKRLMGRSLADIQQRYPHLPYQFQASENGLPMIETAAGLLNPVRVSADILKALAARATEALAGELDGVVITVPAYFDDAQRQGTKDAARLAGLHVLRLLNEPTAAAIAYGLDSGQEGVIAVYDLGGGTFDISILRLSRGVFEVLATGGDSALGGDDFDHLLADYIREQAGIPDRSDNRVQRELLDAAIAAKIALSDAVSVTVNVAGWQGEISREQFNELIAPLVKRTLLACRRALKDAGVEADEVLEVVMVGGSTRVPLVRERVGEFFGRPPLTSIDPDKVVAIGAAIQADILVGNKPDSEMLLLDVIPLSLGLETMGGLVEKVIPRNTTIPVARAQDFTTFKDGQMAMSIHVMQGERELVQDCRSLARFALRGIPALPAGGAHIRVTFQVDADGLLSVTAMEKSTGVEASIQVKPSYGLTDSEIASMIKDSMSYAEQDVKARMLAEQKVEAARVLESLHGALAADAALLSAAERQVIDNAAAHLSEVAQGDDVDAIEQAIKNVDKQTQDFAARRMDQSVRRALKGHSVDEV</sequence>
<accession>B7NRH5</accession>
<reference key="1">
    <citation type="journal article" date="2009" name="PLoS Genet.">
        <title>Organised genome dynamics in the Escherichia coli species results in highly diverse adaptive paths.</title>
        <authorList>
            <person name="Touchon M."/>
            <person name="Hoede C."/>
            <person name="Tenaillon O."/>
            <person name="Barbe V."/>
            <person name="Baeriswyl S."/>
            <person name="Bidet P."/>
            <person name="Bingen E."/>
            <person name="Bonacorsi S."/>
            <person name="Bouchier C."/>
            <person name="Bouvet O."/>
            <person name="Calteau A."/>
            <person name="Chiapello H."/>
            <person name="Clermont O."/>
            <person name="Cruveiller S."/>
            <person name="Danchin A."/>
            <person name="Diard M."/>
            <person name="Dossat C."/>
            <person name="Karoui M.E."/>
            <person name="Frapy E."/>
            <person name="Garry L."/>
            <person name="Ghigo J.M."/>
            <person name="Gilles A.M."/>
            <person name="Johnson J."/>
            <person name="Le Bouguenec C."/>
            <person name="Lescat M."/>
            <person name="Mangenot S."/>
            <person name="Martinez-Jehanne V."/>
            <person name="Matic I."/>
            <person name="Nassif X."/>
            <person name="Oztas S."/>
            <person name="Petit M.A."/>
            <person name="Pichon C."/>
            <person name="Rouy Z."/>
            <person name="Ruf C.S."/>
            <person name="Schneider D."/>
            <person name="Tourret J."/>
            <person name="Vacherie B."/>
            <person name="Vallenet D."/>
            <person name="Medigue C."/>
            <person name="Rocha E.P.C."/>
            <person name="Denamur E."/>
        </authorList>
    </citation>
    <scope>NUCLEOTIDE SEQUENCE [LARGE SCALE GENOMIC DNA]</scope>
    <source>
        <strain>IAI39 / ExPEC</strain>
    </source>
</reference>
<comment type="function">
    <text evidence="1">Chaperone involved in the maturation of iron-sulfur cluster-containing proteins. Has a low intrinsic ATPase activity which is markedly stimulated by HscB. Involved in the maturation of IscU.</text>
</comment>
<comment type="similarity">
    <text evidence="1">Belongs to the heat shock protein 70 family.</text>
</comment>
<dbReference type="EMBL" id="CU928164">
    <property type="protein sequence ID" value="CAR18849.1"/>
    <property type="molecule type" value="Genomic_DNA"/>
</dbReference>
<dbReference type="RefSeq" id="WP_001196625.1">
    <property type="nucleotide sequence ID" value="NC_011750.1"/>
</dbReference>
<dbReference type="RefSeq" id="YP_002408665.1">
    <property type="nucleotide sequence ID" value="NC_011750.1"/>
</dbReference>
<dbReference type="SMR" id="B7NRH5"/>
<dbReference type="STRING" id="585057.ECIAI39_2727"/>
<dbReference type="KEGG" id="ect:ECIAI39_2727"/>
<dbReference type="PATRIC" id="fig|585057.6.peg.2835"/>
<dbReference type="HOGENOM" id="CLU_005965_2_3_6"/>
<dbReference type="Proteomes" id="UP000000749">
    <property type="component" value="Chromosome"/>
</dbReference>
<dbReference type="GO" id="GO:0005524">
    <property type="term" value="F:ATP binding"/>
    <property type="evidence" value="ECO:0007669"/>
    <property type="project" value="UniProtKB-KW"/>
</dbReference>
<dbReference type="GO" id="GO:0016887">
    <property type="term" value="F:ATP hydrolysis activity"/>
    <property type="evidence" value="ECO:0007669"/>
    <property type="project" value="UniProtKB-UniRule"/>
</dbReference>
<dbReference type="GO" id="GO:0140662">
    <property type="term" value="F:ATP-dependent protein folding chaperone"/>
    <property type="evidence" value="ECO:0007669"/>
    <property type="project" value="InterPro"/>
</dbReference>
<dbReference type="GO" id="GO:0051082">
    <property type="term" value="F:unfolded protein binding"/>
    <property type="evidence" value="ECO:0007669"/>
    <property type="project" value="InterPro"/>
</dbReference>
<dbReference type="GO" id="GO:0016226">
    <property type="term" value="P:iron-sulfur cluster assembly"/>
    <property type="evidence" value="ECO:0007669"/>
    <property type="project" value="InterPro"/>
</dbReference>
<dbReference type="CDD" id="cd10236">
    <property type="entry name" value="ASKHA_NBD_HSP70_HscA"/>
    <property type="match status" value="1"/>
</dbReference>
<dbReference type="FunFam" id="1.20.1270.10:FF:000006">
    <property type="entry name" value="Chaperone protein HscA"/>
    <property type="match status" value="1"/>
</dbReference>
<dbReference type="FunFam" id="3.30.420.40:FF:000046">
    <property type="entry name" value="Chaperone protein HscA"/>
    <property type="match status" value="1"/>
</dbReference>
<dbReference type="FunFam" id="3.90.640.10:FF:000013">
    <property type="entry name" value="Chaperone protein HscA"/>
    <property type="match status" value="1"/>
</dbReference>
<dbReference type="FunFam" id="2.60.34.10:FF:000005">
    <property type="entry name" value="Chaperone protein HscA homolog"/>
    <property type="match status" value="1"/>
</dbReference>
<dbReference type="FunFam" id="3.30.420.40:FF:000020">
    <property type="entry name" value="Chaperone protein HscA homolog"/>
    <property type="match status" value="1"/>
</dbReference>
<dbReference type="Gene3D" id="1.20.1270.10">
    <property type="match status" value="1"/>
</dbReference>
<dbReference type="Gene3D" id="3.30.420.40">
    <property type="match status" value="2"/>
</dbReference>
<dbReference type="Gene3D" id="3.90.640.10">
    <property type="entry name" value="Actin, Chain A, domain 4"/>
    <property type="match status" value="1"/>
</dbReference>
<dbReference type="Gene3D" id="2.60.34.10">
    <property type="entry name" value="Substrate Binding Domain Of DNAk, Chain A, domain 1"/>
    <property type="match status" value="1"/>
</dbReference>
<dbReference type="HAMAP" id="MF_00679">
    <property type="entry name" value="HscA"/>
    <property type="match status" value="1"/>
</dbReference>
<dbReference type="InterPro" id="IPR043129">
    <property type="entry name" value="ATPase_NBD"/>
</dbReference>
<dbReference type="InterPro" id="IPR018181">
    <property type="entry name" value="Heat_shock_70_CS"/>
</dbReference>
<dbReference type="InterPro" id="IPR042039">
    <property type="entry name" value="HscA_NBD"/>
</dbReference>
<dbReference type="InterPro" id="IPR029048">
    <property type="entry name" value="HSP70_C_sf"/>
</dbReference>
<dbReference type="InterPro" id="IPR029047">
    <property type="entry name" value="HSP70_peptide-bd_sf"/>
</dbReference>
<dbReference type="InterPro" id="IPR013126">
    <property type="entry name" value="Hsp_70_fam"/>
</dbReference>
<dbReference type="InterPro" id="IPR010236">
    <property type="entry name" value="ISC_FeS_clus_asmbl_HscA"/>
</dbReference>
<dbReference type="NCBIfam" id="TIGR01991">
    <property type="entry name" value="HscA"/>
    <property type="match status" value="1"/>
</dbReference>
<dbReference type="NCBIfam" id="NF003520">
    <property type="entry name" value="PRK05183.1"/>
    <property type="match status" value="1"/>
</dbReference>
<dbReference type="PANTHER" id="PTHR19375">
    <property type="entry name" value="HEAT SHOCK PROTEIN 70KDA"/>
    <property type="match status" value="1"/>
</dbReference>
<dbReference type="Pfam" id="PF00012">
    <property type="entry name" value="HSP70"/>
    <property type="match status" value="1"/>
</dbReference>
<dbReference type="PRINTS" id="PR00301">
    <property type="entry name" value="HEATSHOCK70"/>
</dbReference>
<dbReference type="SUPFAM" id="SSF53067">
    <property type="entry name" value="Actin-like ATPase domain"/>
    <property type="match status" value="2"/>
</dbReference>
<dbReference type="SUPFAM" id="SSF100934">
    <property type="entry name" value="Heat shock protein 70kD (HSP70), C-terminal subdomain"/>
    <property type="match status" value="1"/>
</dbReference>
<dbReference type="SUPFAM" id="SSF100920">
    <property type="entry name" value="Heat shock protein 70kD (HSP70), peptide-binding domain"/>
    <property type="match status" value="1"/>
</dbReference>
<dbReference type="PROSITE" id="PS00297">
    <property type="entry name" value="HSP70_1"/>
    <property type="match status" value="1"/>
</dbReference>
<dbReference type="PROSITE" id="PS00329">
    <property type="entry name" value="HSP70_2"/>
    <property type="match status" value="1"/>
</dbReference>
<dbReference type="PROSITE" id="PS01036">
    <property type="entry name" value="HSP70_3"/>
    <property type="match status" value="1"/>
</dbReference>
<keyword id="KW-0067">ATP-binding</keyword>
<keyword id="KW-0143">Chaperone</keyword>
<keyword id="KW-0547">Nucleotide-binding</keyword>
<protein>
    <recommendedName>
        <fullName evidence="1">Chaperone protein HscA</fullName>
    </recommendedName>
    <alternativeName>
        <fullName evidence="1">Hsc66</fullName>
    </alternativeName>
</protein>
<evidence type="ECO:0000255" key="1">
    <source>
        <dbReference type="HAMAP-Rule" id="MF_00679"/>
    </source>
</evidence>
<feature type="chain" id="PRO_1000131674" description="Chaperone protein HscA">
    <location>
        <begin position="1"/>
        <end position="616"/>
    </location>
</feature>
<name>HSCA_ECO7I</name>
<organism>
    <name type="scientific">Escherichia coli O7:K1 (strain IAI39 / ExPEC)</name>
    <dbReference type="NCBI Taxonomy" id="585057"/>
    <lineage>
        <taxon>Bacteria</taxon>
        <taxon>Pseudomonadati</taxon>
        <taxon>Pseudomonadota</taxon>
        <taxon>Gammaproteobacteria</taxon>
        <taxon>Enterobacterales</taxon>
        <taxon>Enterobacteriaceae</taxon>
        <taxon>Escherichia</taxon>
    </lineage>
</organism>
<gene>
    <name evidence="1" type="primary">hscA</name>
    <name type="ordered locus">ECIAI39_2727</name>
</gene>